<sequence>MVPIRPALAPWPRHLLRCVLLLGGLRLGHPADSAAALLEPDVFLIFSQGMQGCLEAQGVQVRVTPVCNASLPAQRWKWVSRNRLFNLGATQCLGTGWPVTNTTVSLGMYECDREALSLRWQCRTLGDQLSLLLGARASNASKPGTLERGDQTRSGHWNIYGSEEDLCARPYYEVYTIQGNSHGKPCTIPFKYDNQWFHGCTSTGREDGHLWCATTQDYGKDERWGFCPIKSNDCETFWDKDQLTDSCYQFNFQSTLSWREAWASCEQQGADLLSITEIHEQTYINGLLTGYSSTLWIGLNDLDTSGGWQWSDNSPLKYLNWESDQPDNPGEENCGVIRTESSGGWQNHDCSIALPYVCKKKPNATVEPIQPDRWTNVKVECDPSWQPFQGHCYRLQAEKRSWQESKRACLRGGGDLLSIHSMAELEFITKQIKQEVEELWIGLNDLKLQMNFEWSDGSLVSFTHWHPFEPNNFRDSLEDCVTIWGPEGRWNDSPCNQSLPSICKKAGRLSQGAAEEDHGCRKGWTWHSPSCYWLGEDQVIYSDARRLCTDHGSQLVTITNRFEQAFVSSLIYNWEGEYFWTALQDLNSTGSFRWLSGDEVIYTHWNRDQPGYRRGGCVALATGSAMGLWEVKNCTSFRARYICRQSLGTPVTPELPGPDPTPSLTGSCPQGWVSDPKLRHCYKVFSSERLQEKKSWIQALGVCRELGAQLLSLASYEEEHFVAHMLNKIFGESEPESHEQHWFWIGLNRRDPREGHSWRWSDGLGFSYHNFARSRHDDDDIRGCAVLDLASLQWVPMQCQTQLDWICKIPRGVDVREPDIGRQGRLEWVRFQEAEYKFFEHHSSWAQAQRICTWFQADLTSVHSQAELDFLGQNLQKLSSDQEQHWWIGLHTLESDGRFRWTDGSIINFISWAPGKPRPIGKDKKCVYMTARQEDWGDQRCHTALPYICKRSNSSGETQPQDLPPSALGGCPSGWNQFLNKCFRIQGQDPQDRVKWSEAQFSCEQQEAQLVTIANPLEQAFITASLPNVTFDLWIGLHASQRDFQWIEQEPLLYTNWAPGEPSGPSPAPSGTKPTSCAVILHSPSAHFTGRWDDRSCTEETHGFICQKGTDPSLSPSPAATPPAPGAELSYLNHTFRLLQKPLRWKDALLLCESRNASLAHVPDPYTQAFLTQAARGLQTPLWIGLASEEGSRRYSWLSEEPLNYVSWQDEEPQHSGGCAYVDVDGTWRTTSCDTKLQGAVCGVSRGPPPRRINYRGSCPQGLADSSWIPFREHCYSFHMEVLLGHKEALQRCQKAGGTVLSILDEMENVFVWEHLQTAEAQSRGAWLGMNFNPKGGTLVWQDNTAVNYSNWGPPGLGPSMLSHNSCYWIQSSSGLWRPGACTNITMGVVCKLPRVEENSFLPSAALPESPVALVVVLTAVLLLLALMTAALILYRRRQSAERGSFEGARYSRSSHSGPAEATEKNILVSDMEMNEQQE</sequence>
<dbReference type="EMBL" id="U56734">
    <property type="protein sequence ID" value="AAC52729.1"/>
    <property type="status" value="ALT_FRAME"/>
    <property type="molecule type" value="mRNA"/>
</dbReference>
<dbReference type="EMBL" id="AK054150">
    <property type="protein sequence ID" value="BAC35672.1"/>
    <property type="status" value="ALT_INIT"/>
    <property type="molecule type" value="mRNA"/>
</dbReference>
<dbReference type="EMBL" id="AL645471">
    <property type="status" value="NOT_ANNOTATED_CDS"/>
    <property type="molecule type" value="Genomic_DNA"/>
</dbReference>
<dbReference type="EMBL" id="AL645572">
    <property type="status" value="NOT_ANNOTATED_CDS"/>
    <property type="molecule type" value="Genomic_DNA"/>
</dbReference>
<dbReference type="EMBL" id="AL645684">
    <property type="status" value="NOT_ANNOTATED_CDS"/>
    <property type="molecule type" value="Genomic_DNA"/>
</dbReference>
<dbReference type="EMBL" id="AK129195">
    <property type="protein sequence ID" value="BAC98005.1"/>
    <property type="molecule type" value="mRNA"/>
</dbReference>
<dbReference type="CCDS" id="CCDS25539.1">
    <molecule id="Q64449-1"/>
</dbReference>
<dbReference type="PIR" id="T42710">
    <property type="entry name" value="T42710"/>
</dbReference>
<dbReference type="RefSeq" id="NP_032652.3">
    <molecule id="Q64449-1"/>
    <property type="nucleotide sequence ID" value="NM_008626.3"/>
</dbReference>
<dbReference type="SMR" id="Q64449"/>
<dbReference type="BioGRID" id="201485">
    <property type="interactions" value="4"/>
</dbReference>
<dbReference type="FunCoup" id="Q64449">
    <property type="interactions" value="601"/>
</dbReference>
<dbReference type="STRING" id="10090.ENSMUSP00000097909"/>
<dbReference type="GlyConnect" id="2240">
    <property type="glycosylation" value="3 N-Linked glycans (2 sites)"/>
</dbReference>
<dbReference type="GlyCosmos" id="Q64449">
    <property type="glycosylation" value="7 sites, 3 glycans"/>
</dbReference>
<dbReference type="GlyGen" id="Q64449">
    <property type="glycosylation" value="16 sites, 8 N-linked glycans (7 sites), 1 O-linked glycan (3 sites)"/>
</dbReference>
<dbReference type="iPTMnet" id="Q64449"/>
<dbReference type="PhosphoSitePlus" id="Q64449"/>
<dbReference type="jPOST" id="Q64449"/>
<dbReference type="PaxDb" id="10090-ENSMUSP00000097909"/>
<dbReference type="PeptideAtlas" id="Q64449"/>
<dbReference type="ProteomicsDB" id="291442">
    <molecule id="Q64449-1"/>
</dbReference>
<dbReference type="ProteomicsDB" id="291443">
    <molecule id="Q64449-2"/>
</dbReference>
<dbReference type="Pumba" id="Q64449"/>
<dbReference type="Antibodypedia" id="31250">
    <property type="antibodies" value="281 antibodies from 30 providers"/>
</dbReference>
<dbReference type="DNASU" id="17534"/>
<dbReference type="Ensembl" id="ENSMUST00000100335.10">
    <molecule id="Q64449-1"/>
    <property type="protein sequence ID" value="ENSMUSP00000097909.4"/>
    <property type="gene ID" value="ENSMUSG00000020695.15"/>
</dbReference>
<dbReference type="GeneID" id="17534"/>
<dbReference type="KEGG" id="mmu:17534"/>
<dbReference type="UCSC" id="uc007lxi.1">
    <molecule id="Q64449-1"/>
    <property type="organism name" value="mouse"/>
</dbReference>
<dbReference type="AGR" id="MGI:107818"/>
<dbReference type="CTD" id="9902"/>
<dbReference type="MGI" id="MGI:107818">
    <property type="gene designation" value="Mrc2"/>
</dbReference>
<dbReference type="VEuPathDB" id="HostDB:ENSMUSG00000020695"/>
<dbReference type="eggNOG" id="KOG4297">
    <property type="taxonomic scope" value="Eukaryota"/>
</dbReference>
<dbReference type="GeneTree" id="ENSGT01050000244842"/>
<dbReference type="HOGENOM" id="CLU_002069_2_0_1"/>
<dbReference type="InParanoid" id="Q64449"/>
<dbReference type="OMA" id="GFIWEHI"/>
<dbReference type="PhylomeDB" id="Q64449"/>
<dbReference type="TreeFam" id="TF316663"/>
<dbReference type="Reactome" id="R-MMU-1236978">
    <property type="pathway name" value="Cross-presentation of soluble exogenous antigens (endosomes)"/>
</dbReference>
<dbReference type="BioGRID-ORCS" id="17534">
    <property type="hits" value="0 hits in 78 CRISPR screens"/>
</dbReference>
<dbReference type="ChiTaRS" id="Mrc2">
    <property type="organism name" value="mouse"/>
</dbReference>
<dbReference type="PRO" id="PR:Q64449"/>
<dbReference type="Proteomes" id="UP000000589">
    <property type="component" value="Chromosome 11"/>
</dbReference>
<dbReference type="RNAct" id="Q64449">
    <property type="molecule type" value="protein"/>
</dbReference>
<dbReference type="Bgee" id="ENSMUSG00000020695">
    <property type="expression patterns" value="Expressed in brain meninx and 210 other cell types or tissues"/>
</dbReference>
<dbReference type="ExpressionAtlas" id="Q64449">
    <property type="expression patterns" value="baseline and differential"/>
</dbReference>
<dbReference type="GO" id="GO:0009986">
    <property type="term" value="C:cell surface"/>
    <property type="evidence" value="ECO:0000266"/>
    <property type="project" value="MGI"/>
</dbReference>
<dbReference type="GO" id="GO:0005886">
    <property type="term" value="C:plasma membrane"/>
    <property type="evidence" value="ECO:0000304"/>
    <property type="project" value="Reactome"/>
</dbReference>
<dbReference type="GO" id="GO:0030246">
    <property type="term" value="F:carbohydrate binding"/>
    <property type="evidence" value="ECO:0000266"/>
    <property type="project" value="MGI"/>
</dbReference>
<dbReference type="GO" id="GO:0005518">
    <property type="term" value="F:collagen binding"/>
    <property type="evidence" value="ECO:0000266"/>
    <property type="project" value="MGI"/>
</dbReference>
<dbReference type="GO" id="GO:0030574">
    <property type="term" value="P:collagen catabolic process"/>
    <property type="evidence" value="ECO:0007669"/>
    <property type="project" value="Ensembl"/>
</dbReference>
<dbReference type="GO" id="GO:0006897">
    <property type="term" value="P:endocytosis"/>
    <property type="evidence" value="ECO:0007669"/>
    <property type="project" value="UniProtKB-KW"/>
</dbReference>
<dbReference type="CDD" id="cd23408">
    <property type="entry name" value="beta-trefoil_Ricin_MRC2"/>
    <property type="match status" value="1"/>
</dbReference>
<dbReference type="CDD" id="cd00037">
    <property type="entry name" value="CLECT"/>
    <property type="match status" value="7"/>
</dbReference>
<dbReference type="CDD" id="cd03590">
    <property type="entry name" value="CLECT_DC-SIGN_like"/>
    <property type="match status" value="1"/>
</dbReference>
<dbReference type="CDD" id="cd00062">
    <property type="entry name" value="FN2"/>
    <property type="match status" value="1"/>
</dbReference>
<dbReference type="FunFam" id="3.10.100.10:FF:000026">
    <property type="entry name" value="C-type mannose receptor 2"/>
    <property type="match status" value="1"/>
</dbReference>
<dbReference type="FunFam" id="3.10.100.10:FF:000035">
    <property type="entry name" value="C-type mannose receptor 2"/>
    <property type="match status" value="1"/>
</dbReference>
<dbReference type="FunFam" id="2.10.10.10:FF:000001">
    <property type="entry name" value="Fibronectin 1a isoform 1"/>
    <property type="match status" value="1"/>
</dbReference>
<dbReference type="FunFam" id="2.80.10.50:FF:000035">
    <property type="entry name" value="Mannose receptor C type 2"/>
    <property type="match status" value="1"/>
</dbReference>
<dbReference type="FunFam" id="3.10.100.10:FF:000019">
    <property type="entry name" value="Mannose receptor C type 2"/>
    <property type="match status" value="1"/>
</dbReference>
<dbReference type="FunFam" id="3.10.100.10:FF:000020">
    <property type="entry name" value="Mannose receptor C type 2"/>
    <property type="match status" value="1"/>
</dbReference>
<dbReference type="FunFam" id="3.10.100.10:FF:000021">
    <property type="entry name" value="Mannose receptor C type 2"/>
    <property type="match status" value="1"/>
</dbReference>
<dbReference type="FunFam" id="3.10.100.10:FF:000029">
    <property type="entry name" value="Mannose receptor C type 2"/>
    <property type="match status" value="1"/>
</dbReference>
<dbReference type="FunFam" id="3.10.100.10:FF:000033">
    <property type="entry name" value="Mannose receptor C type 2"/>
    <property type="match status" value="1"/>
</dbReference>
<dbReference type="FunFam" id="3.10.100.10:FF:000018">
    <property type="entry name" value="Mannose receptor, C type 2"/>
    <property type="match status" value="1"/>
</dbReference>
<dbReference type="Gene3D" id="2.80.10.50">
    <property type="match status" value="1"/>
</dbReference>
<dbReference type="Gene3D" id="2.10.10.10">
    <property type="entry name" value="Fibronectin, type II, collagen-binding"/>
    <property type="match status" value="1"/>
</dbReference>
<dbReference type="Gene3D" id="3.10.100.10">
    <property type="entry name" value="Mannose-Binding Protein A, subunit A"/>
    <property type="match status" value="8"/>
</dbReference>
<dbReference type="InterPro" id="IPR001304">
    <property type="entry name" value="C-type_lectin-like"/>
</dbReference>
<dbReference type="InterPro" id="IPR016186">
    <property type="entry name" value="C-type_lectin-like/link_sf"/>
</dbReference>
<dbReference type="InterPro" id="IPR050111">
    <property type="entry name" value="C-type_lectin/snaclec_domain"/>
</dbReference>
<dbReference type="InterPro" id="IPR018378">
    <property type="entry name" value="C-type_lectin_CS"/>
</dbReference>
<dbReference type="InterPro" id="IPR033989">
    <property type="entry name" value="CD209-like_CTLD"/>
</dbReference>
<dbReference type="InterPro" id="IPR016187">
    <property type="entry name" value="CTDL_fold"/>
</dbReference>
<dbReference type="InterPro" id="IPR000562">
    <property type="entry name" value="FN_type2_dom"/>
</dbReference>
<dbReference type="InterPro" id="IPR036943">
    <property type="entry name" value="FN_type2_sf"/>
</dbReference>
<dbReference type="InterPro" id="IPR013806">
    <property type="entry name" value="Kringle-like"/>
</dbReference>
<dbReference type="InterPro" id="IPR035992">
    <property type="entry name" value="Ricin_B-like_lectins"/>
</dbReference>
<dbReference type="InterPro" id="IPR000772">
    <property type="entry name" value="Ricin_B_lectin"/>
</dbReference>
<dbReference type="PANTHER" id="PTHR22803">
    <property type="entry name" value="MANNOSE, PHOSPHOLIPASE, LECTIN RECEPTOR RELATED"/>
    <property type="match status" value="1"/>
</dbReference>
<dbReference type="Pfam" id="PF24562">
    <property type="entry name" value="CysR_MRC2_N"/>
    <property type="match status" value="1"/>
</dbReference>
<dbReference type="Pfam" id="PF00040">
    <property type="entry name" value="fn2"/>
    <property type="match status" value="1"/>
</dbReference>
<dbReference type="Pfam" id="PF00059">
    <property type="entry name" value="Lectin_C"/>
    <property type="match status" value="8"/>
</dbReference>
<dbReference type="PRINTS" id="PR00013">
    <property type="entry name" value="FNTYPEII"/>
</dbReference>
<dbReference type="SMART" id="SM00034">
    <property type="entry name" value="CLECT"/>
    <property type="match status" value="8"/>
</dbReference>
<dbReference type="SMART" id="SM00059">
    <property type="entry name" value="FN2"/>
    <property type="match status" value="1"/>
</dbReference>
<dbReference type="SMART" id="SM00458">
    <property type="entry name" value="RICIN"/>
    <property type="match status" value="1"/>
</dbReference>
<dbReference type="SUPFAM" id="SSF56436">
    <property type="entry name" value="C-type lectin-like"/>
    <property type="match status" value="8"/>
</dbReference>
<dbReference type="SUPFAM" id="SSF57440">
    <property type="entry name" value="Kringle-like"/>
    <property type="match status" value="1"/>
</dbReference>
<dbReference type="SUPFAM" id="SSF50370">
    <property type="entry name" value="Ricin B-like lectins"/>
    <property type="match status" value="1"/>
</dbReference>
<dbReference type="PROSITE" id="PS00615">
    <property type="entry name" value="C_TYPE_LECTIN_1"/>
    <property type="match status" value="3"/>
</dbReference>
<dbReference type="PROSITE" id="PS50041">
    <property type="entry name" value="C_TYPE_LECTIN_2"/>
    <property type="match status" value="8"/>
</dbReference>
<dbReference type="PROSITE" id="PS00023">
    <property type="entry name" value="FN2_1"/>
    <property type="match status" value="1"/>
</dbReference>
<dbReference type="PROSITE" id="PS51092">
    <property type="entry name" value="FN2_2"/>
    <property type="match status" value="1"/>
</dbReference>
<dbReference type="PROSITE" id="PS50231">
    <property type="entry name" value="RICIN_B_LECTIN"/>
    <property type="match status" value="1"/>
</dbReference>
<organism>
    <name type="scientific">Mus musculus</name>
    <name type="common">Mouse</name>
    <dbReference type="NCBI Taxonomy" id="10090"/>
    <lineage>
        <taxon>Eukaryota</taxon>
        <taxon>Metazoa</taxon>
        <taxon>Chordata</taxon>
        <taxon>Craniata</taxon>
        <taxon>Vertebrata</taxon>
        <taxon>Euteleostomi</taxon>
        <taxon>Mammalia</taxon>
        <taxon>Eutheria</taxon>
        <taxon>Euarchontoglires</taxon>
        <taxon>Glires</taxon>
        <taxon>Rodentia</taxon>
        <taxon>Myomorpha</taxon>
        <taxon>Muroidea</taxon>
        <taxon>Muridae</taxon>
        <taxon>Murinae</taxon>
        <taxon>Mus</taxon>
        <taxon>Mus</taxon>
    </lineage>
</organism>
<proteinExistence type="evidence at protein level"/>
<keyword id="KW-0025">Alternative splicing</keyword>
<keyword id="KW-0106">Calcium</keyword>
<keyword id="KW-1015">Disulfide bond</keyword>
<keyword id="KW-0254">Endocytosis</keyword>
<keyword id="KW-0325">Glycoprotein</keyword>
<keyword id="KW-1017">Isopeptide bond</keyword>
<keyword id="KW-0430">Lectin</keyword>
<keyword id="KW-0472">Membrane</keyword>
<keyword id="KW-0597">Phosphoprotein</keyword>
<keyword id="KW-0675">Receptor</keyword>
<keyword id="KW-1185">Reference proteome</keyword>
<keyword id="KW-0677">Repeat</keyword>
<keyword id="KW-0732">Signal</keyword>
<keyword id="KW-0812">Transmembrane</keyword>
<keyword id="KW-1133">Transmembrane helix</keyword>
<keyword id="KW-0832">Ubl conjugation</keyword>
<accession>Q64449</accession>
<accession>A2AAB0</accession>
<accession>Q6ZQ64</accession>
<accession>Q8C6P0</accession>
<evidence type="ECO:0000250" key="1"/>
<evidence type="ECO:0000250" key="2">
    <source>
        <dbReference type="UniProtKB" id="Q9UBG0"/>
    </source>
</evidence>
<evidence type="ECO:0000255" key="3"/>
<evidence type="ECO:0000255" key="4">
    <source>
        <dbReference type="PROSITE-ProRule" id="PRU00040"/>
    </source>
</evidence>
<evidence type="ECO:0000255" key="5">
    <source>
        <dbReference type="PROSITE-ProRule" id="PRU00174"/>
    </source>
</evidence>
<evidence type="ECO:0000255" key="6">
    <source>
        <dbReference type="PROSITE-ProRule" id="PRU00479"/>
    </source>
</evidence>
<evidence type="ECO:0000256" key="7">
    <source>
        <dbReference type="SAM" id="MobiDB-lite"/>
    </source>
</evidence>
<evidence type="ECO:0000269" key="8">
    <source>
    </source>
</evidence>
<evidence type="ECO:0000269" key="9">
    <source>
    </source>
</evidence>
<evidence type="ECO:0000269" key="10">
    <source>
    </source>
</evidence>
<evidence type="ECO:0000269" key="11">
    <source>
    </source>
</evidence>
<evidence type="ECO:0000269" key="12">
    <source>
    </source>
</evidence>
<evidence type="ECO:0000269" key="13">
    <source>
    </source>
</evidence>
<evidence type="ECO:0000303" key="14">
    <source>
    </source>
</evidence>
<evidence type="ECO:0000305" key="15"/>
<feature type="signal peptide" evidence="3">
    <location>
        <begin position="1"/>
        <end position="30"/>
    </location>
</feature>
<feature type="chain" id="PRO_0000046079" description="C-type mannose receptor 2">
    <location>
        <begin position="31"/>
        <end position="1479"/>
    </location>
</feature>
<feature type="topological domain" description="Extracellular" evidence="3">
    <location>
        <begin position="31"/>
        <end position="1413"/>
    </location>
</feature>
<feature type="transmembrane region" description="Helical" evidence="3">
    <location>
        <begin position="1414"/>
        <end position="1434"/>
    </location>
</feature>
<feature type="topological domain" description="Cytoplasmic" evidence="3">
    <location>
        <begin position="1435"/>
        <end position="1479"/>
    </location>
</feature>
<feature type="domain" description="Ricin B-type lectin" evidence="5">
    <location>
        <begin position="37"/>
        <end position="190"/>
    </location>
</feature>
<feature type="domain" description="Fibronectin type-II" evidence="6">
    <location>
        <begin position="181"/>
        <end position="229"/>
    </location>
</feature>
<feature type="domain" description="C-type lectin 1" evidence="4">
    <location>
        <begin position="243"/>
        <end position="359"/>
    </location>
</feature>
<feature type="domain" description="C-type lectin 2" evidence="4">
    <location>
        <begin position="388"/>
        <end position="504"/>
    </location>
</feature>
<feature type="domain" description="C-type lectin 3" evidence="4">
    <location>
        <begin position="527"/>
        <end position="643"/>
    </location>
</feature>
<feature type="domain" description="C-type lectin 4" evidence="4">
    <location>
        <begin position="677"/>
        <end position="808"/>
    </location>
</feature>
<feature type="domain" description="C-type lectin 5" evidence="4">
    <location>
        <begin position="831"/>
        <end position="950"/>
    </location>
</feature>
<feature type="domain" description="C-type lectin 6" evidence="4">
    <location>
        <begin position="978"/>
        <end position="1106"/>
    </location>
</feature>
<feature type="domain" description="C-type lectin 7" evidence="4">
    <location>
        <begin position="1131"/>
        <end position="1242"/>
    </location>
</feature>
<feature type="domain" description="C-type lectin 8" evidence="4">
    <location>
        <begin position="1271"/>
        <end position="1391"/>
    </location>
</feature>
<feature type="region of interest" description="Disordered" evidence="7">
    <location>
        <begin position="1446"/>
        <end position="1479"/>
    </location>
</feature>
<feature type="glycosylation site" description="N-linked (GlcNAc...) asparagine" evidence="3">
    <location>
        <position position="101"/>
    </location>
</feature>
<feature type="glycosylation site" description="N-linked (GlcNAc...) asparagine" evidence="12">
    <location>
        <position position="139"/>
    </location>
</feature>
<feature type="glycosylation site" description="N-linked (GlcNAc...) asparagine" evidence="12">
    <location>
        <position position="363"/>
    </location>
</feature>
<feature type="glycosylation site" description="N-linked (GlcNAc...) asparagine" evidence="3">
    <location>
        <position position="1028"/>
    </location>
</feature>
<feature type="glycosylation site" description="N-linked (GlcNAc...) asparagine" evidence="3">
    <location>
        <position position="1348"/>
    </location>
</feature>
<feature type="disulfide bond" evidence="1">
    <location>
        <begin position="92"/>
        <end position="111"/>
    </location>
</feature>
<feature type="disulfide bond" evidence="1">
    <location>
        <begin position="186"/>
        <end position="212"/>
    </location>
</feature>
<feature type="disulfide bond" evidence="1">
    <location>
        <begin position="200"/>
        <end position="227"/>
    </location>
</feature>
<feature type="disulfide bond" evidence="1">
    <location>
        <begin position="265"/>
        <end position="358"/>
    </location>
</feature>
<feature type="disulfide bond" evidence="1">
    <location>
        <begin position="334"/>
        <end position="350"/>
    </location>
</feature>
<feature type="disulfide bond" evidence="1">
    <location>
        <begin position="409"/>
        <end position="503"/>
    </location>
</feature>
<feature type="disulfide bond" evidence="1">
    <location>
        <begin position="480"/>
        <end position="495"/>
    </location>
</feature>
<feature type="disulfide bond" evidence="1">
    <location>
        <begin position="617"/>
        <end position="634"/>
    </location>
</feature>
<feature type="disulfide bond" evidence="1">
    <location>
        <begin position="703"/>
        <end position="807"/>
    </location>
</feature>
<feature type="disulfide bond" evidence="1">
    <location>
        <begin position="784"/>
        <end position="799"/>
    </location>
</feature>
<feature type="disulfide bond" evidence="1">
    <location>
        <begin position="852"/>
        <end position="949"/>
    </location>
</feature>
<feature type="disulfide bond" evidence="1">
    <location>
        <begin position="926"/>
        <end position="941"/>
    </location>
</feature>
<feature type="disulfide bond" evidence="1">
    <location>
        <begin position="1077"/>
        <end position="1097"/>
    </location>
</feature>
<feature type="disulfide bond" evidence="1">
    <location>
        <begin position="1219"/>
        <end position="1233"/>
    </location>
</feature>
<feature type="disulfide bond" evidence="1">
    <location>
        <begin position="1367"/>
        <end position="1382"/>
    </location>
</feature>
<feature type="cross-link" description="Glycyl lysine isopeptide (Lys-Gly) (interchain with G-Cter in SUMO1)" evidence="2">
    <location>
        <position position="1141"/>
    </location>
</feature>
<feature type="splice variant" id="VSP_017223" description="In isoform 2." evidence="14">
    <original>EVYTIQGN</original>
    <variation>GEGSIAKS</variation>
    <location>
        <begin position="173"/>
        <end position="180"/>
    </location>
</feature>
<feature type="splice variant" id="VSP_017224" description="In isoform 2." evidence="14">
    <location>
        <begin position="181"/>
        <end position="1479"/>
    </location>
</feature>
<feature type="sequence conflict" description="In Ref. 1; AAC52729." evidence="15" ref="1">
    <original>V</original>
    <variation>F</variation>
    <location>
        <position position="66"/>
    </location>
</feature>
<feature type="sequence conflict" description="In Ref. 1; AAC52729." evidence="15" ref="1">
    <original>G</original>
    <variation>D</variation>
    <location>
        <position position="519"/>
    </location>
</feature>
<feature type="sequence conflict" description="In Ref. 1; AAC52729." evidence="15" ref="1">
    <original>D</original>
    <variation>G</variation>
    <location>
        <position position="869"/>
    </location>
</feature>
<feature type="sequence conflict" description="In Ref. 4; BAC98005." evidence="15" ref="4">
    <original>R</original>
    <variation>Q</variation>
    <location>
        <position position="984"/>
    </location>
</feature>
<comment type="function">
    <text evidence="8 10 11">May play a role as endocytotic lectin receptor displaying calcium-dependent lectin activity. Internalizes glycosylated ligands from the extracellular space for release in an endosomal compartment via clathrin-mediated endocytosis. May be involved in plasminogen activation system controlling the extracellular level of PLAUR/PLAU, and thus may regulate protease activity at the cell surface. May contribute to cellular uptake, remodeling and degradation of extracellular collagen matrices. May participate in remodeling of extracellular matrix cooperating with the matrix metalloproteinases (MMPs).</text>
</comment>
<comment type="subunit">
    <text evidence="1">Interacts directly with PLAUR/UPAR and PLAU/pro-UPA to form a tri-molecular complex. Interacts with collagen V and with C-terminal region of type I collagen/COL1A1 (By similarity).</text>
</comment>
<comment type="subcellular location">
    <subcellularLocation>
        <location>Membrane</location>
        <topology>Single-pass type I membrane protein</topology>
    </subcellularLocation>
</comment>
<comment type="alternative products">
    <event type="alternative splicing"/>
    <isoform>
        <id>Q64449-1</id>
        <name>1</name>
        <sequence type="displayed"/>
    </isoform>
    <isoform>
        <id>Q64449-2</id>
        <name>2</name>
        <sequence type="described" ref="VSP_017223 VSP_017224"/>
    </isoform>
</comment>
<comment type="tissue specificity">
    <text evidence="13">Highly expressed in heart, lung and kidney, but little or no expression in brain, thymus or adult liver. Expressed at highly endothelialized sites such as those in choroid plexus and kidney glomerulai as well as in chondrocytes in cartilaginous regions of the embryo.</text>
</comment>
<comment type="developmental stage">
    <text evidence="13">Highly expressed at day 7 of embryonic development and detected throughout the later stages of embryonic development.</text>
</comment>
<comment type="domain">
    <text evidence="1">C-type lectin domains 3 to 8 are not required for calcium-dependent binding of mannose, fucose and N-acetylglucosamine. C-type lectin domain 2 is responsible for sugar-binding in a calcium-dependent manner (By similarity).</text>
</comment>
<comment type="domain">
    <text evidence="1">Fibronectin type-II domain mediates collagen-binding.</text>
</comment>
<comment type="domain">
    <text>Ricin B-type lectin domain contacts with the second C-type lectin domain.</text>
</comment>
<comment type="PTM">
    <text evidence="1">Phosphorylated.</text>
</comment>
<comment type="disruption phenotype">
    <text evidence="8 9 10 11">Mice show impaired mammary tumor growth. Tumors from mice lacking Mrc2 display an abrogation of cellular collagen uptake, a fibrotic state characterized by the accumulation of both basement membrane and interstitial collagens, and an overall tumor size reduction, despite the collagen accumulation. Fibroblasts from mice lacking Mrc2 display a severe impairment of internalization of collagen IV and V and thus, exhibit a general deficiency in uptake and delivery of collagens to vesicular compartments. Fibroblasts also have diminished initial adhesion to collagen as well as impaired migration on fibrillar collagen. Mice with a targeted deletion of Mrc2 exon 2-6 are phenotypically normal, healthy and fertile. This deletion resulted in expression of a protein that lacks the ricin B-type lectin domain, the fibronectin type-II domain and the first C-type lectin domain. Fibroblasts from these mice display C-type lectin activity, but have a defect in collagen-binding and internalization, and an impaired migratory phenotype.</text>
</comment>
<comment type="sequence caution" evidence="15">
    <conflict type="frameshift">
        <sequence resource="EMBL-CDS" id="AAC52729"/>
    </conflict>
</comment>
<comment type="sequence caution" evidence="15">
    <conflict type="erroneous initiation">
        <sequence resource="EMBL-CDS" id="BAC35672"/>
    </conflict>
</comment>
<comment type="online information" name="Functional Glycomics Gateway - Glycan Binding">
    <link uri="http://www.functionalglycomics.org/glycomics/GBPServlet?&amp;operationType=view&amp;cbpId=cbp_mou_Ctlect_252"/>
    <text>Endo180</text>
</comment>
<reference key="1">
    <citation type="journal article" date="1996" name="J. Biol. Chem.">
        <title>Characterization of a novel member of the macrophage mannose receptor type C lectin family.</title>
        <authorList>
            <person name="Wu K."/>
            <person name="Yuan J."/>
            <person name="Lasky L.A."/>
        </authorList>
    </citation>
    <scope>NUCLEOTIDE SEQUENCE [MRNA] (ISOFORM 1)</scope>
    <scope>TISSUE SPECIFICITY</scope>
    <scope>DEVELOPMENTAL STAGE</scope>
</reference>
<reference key="2">
    <citation type="journal article" date="2005" name="Science">
        <title>The transcriptional landscape of the mammalian genome.</title>
        <authorList>
            <person name="Carninci P."/>
            <person name="Kasukawa T."/>
            <person name="Katayama S."/>
            <person name="Gough J."/>
            <person name="Frith M.C."/>
            <person name="Maeda N."/>
            <person name="Oyama R."/>
            <person name="Ravasi T."/>
            <person name="Lenhard B."/>
            <person name="Wells C."/>
            <person name="Kodzius R."/>
            <person name="Shimokawa K."/>
            <person name="Bajic V.B."/>
            <person name="Brenner S.E."/>
            <person name="Batalov S."/>
            <person name="Forrest A.R."/>
            <person name="Zavolan M."/>
            <person name="Davis M.J."/>
            <person name="Wilming L.G."/>
            <person name="Aidinis V."/>
            <person name="Allen J.E."/>
            <person name="Ambesi-Impiombato A."/>
            <person name="Apweiler R."/>
            <person name="Aturaliya R.N."/>
            <person name="Bailey T.L."/>
            <person name="Bansal M."/>
            <person name="Baxter L."/>
            <person name="Beisel K.W."/>
            <person name="Bersano T."/>
            <person name="Bono H."/>
            <person name="Chalk A.M."/>
            <person name="Chiu K.P."/>
            <person name="Choudhary V."/>
            <person name="Christoffels A."/>
            <person name="Clutterbuck D.R."/>
            <person name="Crowe M.L."/>
            <person name="Dalla E."/>
            <person name="Dalrymple B.P."/>
            <person name="de Bono B."/>
            <person name="Della Gatta G."/>
            <person name="di Bernardo D."/>
            <person name="Down T."/>
            <person name="Engstrom P."/>
            <person name="Fagiolini M."/>
            <person name="Faulkner G."/>
            <person name="Fletcher C.F."/>
            <person name="Fukushima T."/>
            <person name="Furuno M."/>
            <person name="Futaki S."/>
            <person name="Gariboldi M."/>
            <person name="Georgii-Hemming P."/>
            <person name="Gingeras T.R."/>
            <person name="Gojobori T."/>
            <person name="Green R.E."/>
            <person name="Gustincich S."/>
            <person name="Harbers M."/>
            <person name="Hayashi Y."/>
            <person name="Hensch T.K."/>
            <person name="Hirokawa N."/>
            <person name="Hill D."/>
            <person name="Huminiecki L."/>
            <person name="Iacono M."/>
            <person name="Ikeo K."/>
            <person name="Iwama A."/>
            <person name="Ishikawa T."/>
            <person name="Jakt M."/>
            <person name="Kanapin A."/>
            <person name="Katoh M."/>
            <person name="Kawasawa Y."/>
            <person name="Kelso J."/>
            <person name="Kitamura H."/>
            <person name="Kitano H."/>
            <person name="Kollias G."/>
            <person name="Krishnan S.P."/>
            <person name="Kruger A."/>
            <person name="Kummerfeld S.K."/>
            <person name="Kurochkin I.V."/>
            <person name="Lareau L.F."/>
            <person name="Lazarevic D."/>
            <person name="Lipovich L."/>
            <person name="Liu J."/>
            <person name="Liuni S."/>
            <person name="McWilliam S."/>
            <person name="Madan Babu M."/>
            <person name="Madera M."/>
            <person name="Marchionni L."/>
            <person name="Matsuda H."/>
            <person name="Matsuzawa S."/>
            <person name="Miki H."/>
            <person name="Mignone F."/>
            <person name="Miyake S."/>
            <person name="Morris K."/>
            <person name="Mottagui-Tabar S."/>
            <person name="Mulder N."/>
            <person name="Nakano N."/>
            <person name="Nakauchi H."/>
            <person name="Ng P."/>
            <person name="Nilsson R."/>
            <person name="Nishiguchi S."/>
            <person name="Nishikawa S."/>
            <person name="Nori F."/>
            <person name="Ohara O."/>
            <person name="Okazaki Y."/>
            <person name="Orlando V."/>
            <person name="Pang K.C."/>
            <person name="Pavan W.J."/>
            <person name="Pavesi G."/>
            <person name="Pesole G."/>
            <person name="Petrovsky N."/>
            <person name="Piazza S."/>
            <person name="Reed J."/>
            <person name="Reid J.F."/>
            <person name="Ring B.Z."/>
            <person name="Ringwald M."/>
            <person name="Rost B."/>
            <person name="Ruan Y."/>
            <person name="Salzberg S.L."/>
            <person name="Sandelin A."/>
            <person name="Schneider C."/>
            <person name="Schoenbach C."/>
            <person name="Sekiguchi K."/>
            <person name="Semple C.A."/>
            <person name="Seno S."/>
            <person name="Sessa L."/>
            <person name="Sheng Y."/>
            <person name="Shibata Y."/>
            <person name="Shimada H."/>
            <person name="Shimada K."/>
            <person name="Silva D."/>
            <person name="Sinclair B."/>
            <person name="Sperling S."/>
            <person name="Stupka E."/>
            <person name="Sugiura K."/>
            <person name="Sultana R."/>
            <person name="Takenaka Y."/>
            <person name="Taki K."/>
            <person name="Tammoja K."/>
            <person name="Tan S.L."/>
            <person name="Tang S."/>
            <person name="Taylor M.S."/>
            <person name="Tegner J."/>
            <person name="Teichmann S.A."/>
            <person name="Ueda H.R."/>
            <person name="van Nimwegen E."/>
            <person name="Verardo R."/>
            <person name="Wei C.L."/>
            <person name="Yagi K."/>
            <person name="Yamanishi H."/>
            <person name="Zabarovsky E."/>
            <person name="Zhu S."/>
            <person name="Zimmer A."/>
            <person name="Hide W."/>
            <person name="Bult C."/>
            <person name="Grimmond S.M."/>
            <person name="Teasdale R.D."/>
            <person name="Liu E.T."/>
            <person name="Brusic V."/>
            <person name="Quackenbush J."/>
            <person name="Wahlestedt C."/>
            <person name="Mattick J.S."/>
            <person name="Hume D.A."/>
            <person name="Kai C."/>
            <person name="Sasaki D."/>
            <person name="Tomaru Y."/>
            <person name="Fukuda S."/>
            <person name="Kanamori-Katayama M."/>
            <person name="Suzuki M."/>
            <person name="Aoki J."/>
            <person name="Arakawa T."/>
            <person name="Iida J."/>
            <person name="Imamura K."/>
            <person name="Itoh M."/>
            <person name="Kato T."/>
            <person name="Kawaji H."/>
            <person name="Kawagashira N."/>
            <person name="Kawashima T."/>
            <person name="Kojima M."/>
            <person name="Kondo S."/>
            <person name="Konno H."/>
            <person name="Nakano K."/>
            <person name="Ninomiya N."/>
            <person name="Nishio T."/>
            <person name="Okada M."/>
            <person name="Plessy C."/>
            <person name="Shibata K."/>
            <person name="Shiraki T."/>
            <person name="Suzuki S."/>
            <person name="Tagami M."/>
            <person name="Waki K."/>
            <person name="Watahiki A."/>
            <person name="Okamura-Oho Y."/>
            <person name="Suzuki H."/>
            <person name="Kawai J."/>
            <person name="Hayashizaki Y."/>
        </authorList>
    </citation>
    <scope>NUCLEOTIDE SEQUENCE [LARGE SCALE MRNA] (ISOFORM 2)</scope>
    <source>
        <strain>C57BL/6J</strain>
        <tissue>Oviduct</tissue>
    </source>
</reference>
<reference key="3">
    <citation type="journal article" date="2009" name="PLoS Biol.">
        <title>Lineage-specific biology revealed by a finished genome assembly of the mouse.</title>
        <authorList>
            <person name="Church D.M."/>
            <person name="Goodstadt L."/>
            <person name="Hillier L.W."/>
            <person name="Zody M.C."/>
            <person name="Goldstein S."/>
            <person name="She X."/>
            <person name="Bult C.J."/>
            <person name="Agarwala R."/>
            <person name="Cherry J.L."/>
            <person name="DiCuccio M."/>
            <person name="Hlavina W."/>
            <person name="Kapustin Y."/>
            <person name="Meric P."/>
            <person name="Maglott D."/>
            <person name="Birtle Z."/>
            <person name="Marques A.C."/>
            <person name="Graves T."/>
            <person name="Zhou S."/>
            <person name="Teague B."/>
            <person name="Potamousis K."/>
            <person name="Churas C."/>
            <person name="Place M."/>
            <person name="Herschleb J."/>
            <person name="Runnheim R."/>
            <person name="Forrest D."/>
            <person name="Amos-Landgraf J."/>
            <person name="Schwartz D.C."/>
            <person name="Cheng Z."/>
            <person name="Lindblad-Toh K."/>
            <person name="Eichler E.E."/>
            <person name="Ponting C.P."/>
        </authorList>
    </citation>
    <scope>NUCLEOTIDE SEQUENCE [LARGE SCALE GENOMIC DNA]</scope>
    <source>
        <strain>C57BL/6J</strain>
    </source>
</reference>
<reference key="4">
    <citation type="journal article" date="2003" name="DNA Res.">
        <title>Prediction of the coding sequences of mouse homologues of KIAA gene: III. The complete nucleotide sequences of 500 mouse KIAA-homologous cDNAs identified by screening of terminal sequences of cDNA clones randomly sampled from size-fractionated libraries.</title>
        <authorList>
            <person name="Okazaki N."/>
            <person name="Kikuno R."/>
            <person name="Ohara R."/>
            <person name="Inamoto S."/>
            <person name="Koseki H."/>
            <person name="Hiraoka S."/>
            <person name="Saga Y."/>
            <person name="Nagase T."/>
            <person name="Ohara O."/>
            <person name="Koga H."/>
        </authorList>
    </citation>
    <scope>NUCLEOTIDE SEQUENCE [LARGE SCALE MRNA] OF 479-1479 (ISOFORM 1)</scope>
    <source>
        <tissue>Embryonic tail</tissue>
    </source>
</reference>
<reference key="5">
    <citation type="journal article" date="2003" name="EMBO Rep.">
        <title>A targeted deletion in the endocytic receptor gene Endo180 results in a defect in collagen uptake.</title>
        <authorList>
            <person name="East L."/>
            <person name="McCarthy A."/>
            <person name="Wienke D."/>
            <person name="Sturge J."/>
            <person name="Ashworth A."/>
            <person name="Isacke C.M."/>
        </authorList>
    </citation>
    <scope>DISRUPTION PHENOTYPE</scope>
</reference>
<reference key="6">
    <citation type="journal article" date="2003" name="J. Cell Biol.">
        <title>uPARAP/Endo180 is essential for cellular uptake of collagen and promotes fibroblast collagen adhesion.</title>
        <authorList>
            <person name="Engelholm L.H."/>
            <person name="List K."/>
            <person name="Netzel-Arnett S."/>
            <person name="Cukierman E."/>
            <person name="Mitola D.J."/>
            <person name="Aaronson H."/>
            <person name="Kjoller L."/>
            <person name="Larsen J.K."/>
            <person name="Yamada K.M."/>
            <person name="Strickland D.K."/>
            <person name="Holmbeck K."/>
            <person name="Danoe K."/>
            <person name="Birkedal-Hansen H."/>
            <person name="Behrendt N."/>
            <person name="Bugge T.H."/>
        </authorList>
    </citation>
    <scope>FUNCTION</scope>
    <scope>DISRUPTION PHENOTYPE</scope>
</reference>
<reference key="7">
    <citation type="journal article" date="2004" name="Exp. Cell Res.">
        <title>uPARAP/endo180 directs lysosomal delivery and degradation of collagen IV.</title>
        <authorList>
            <person name="Kjoller L."/>
            <person name="Engelholm L.H."/>
            <person name="Hoyer-Hansen M."/>
            <person name="Danoe K."/>
            <person name="Bugge T.H."/>
            <person name="Behrendt N."/>
        </authorList>
    </citation>
    <scope>FUNCTION</scope>
    <scope>DISRUPTION PHENOTYPE</scope>
</reference>
<reference key="8">
    <citation type="journal article" date="2005" name="J. Cell Biol.">
        <title>Intracellular collagen degradation mediated by uPARAP/Endo180 is a major pathway of extracellular matrix turnover during malignancy.</title>
        <authorList>
            <person name="Curino A.C."/>
            <person name="Engelholm L.H."/>
            <person name="Yamada S.S."/>
            <person name="Holmbeck K."/>
            <person name="Lund L.R."/>
            <person name="Molinolo A.A."/>
            <person name="Behrendt N."/>
            <person name="Nielsen B.S."/>
            <person name="Bugge T.H."/>
        </authorList>
    </citation>
    <scope>FUNCTION</scope>
    <scope>DISRUPTION PHENOTYPE</scope>
</reference>
<reference key="9">
    <citation type="journal article" date="2009" name="Mol. Cell. Proteomics">
        <title>The mouse C2C12 myoblast cell surface N-linked glycoproteome: identification, glycosite occupancy, and membrane orientation.</title>
        <authorList>
            <person name="Gundry R.L."/>
            <person name="Raginski K."/>
            <person name="Tarasova Y."/>
            <person name="Tchernyshyov I."/>
            <person name="Bausch-Fluck D."/>
            <person name="Elliott S.T."/>
            <person name="Boheler K.R."/>
            <person name="Van Eyk J.E."/>
            <person name="Wollscheid B."/>
        </authorList>
    </citation>
    <scope>GLYCOSYLATION [LARGE SCALE ANALYSIS] AT ASN-139 AND ASN-363</scope>
    <source>
        <tissue>Myoblast</tissue>
    </source>
</reference>
<reference key="10">
    <citation type="journal article" date="2010" name="Cell">
        <title>A tissue-specific atlas of mouse protein phosphorylation and expression.</title>
        <authorList>
            <person name="Huttlin E.L."/>
            <person name="Jedrychowski M.P."/>
            <person name="Elias J.E."/>
            <person name="Goswami T."/>
            <person name="Rad R."/>
            <person name="Beausoleil S.A."/>
            <person name="Villen J."/>
            <person name="Haas W."/>
            <person name="Sowa M.E."/>
            <person name="Gygi S.P."/>
        </authorList>
    </citation>
    <scope>IDENTIFICATION BY MASS SPECTROMETRY [LARGE SCALE ANALYSIS]</scope>
    <source>
        <tissue>Brown adipose tissue</tissue>
        <tissue>Heart</tissue>
        <tissue>Kidney</tissue>
        <tissue>Lung</tissue>
        <tissue>Pancreas</tissue>
        <tissue>Spleen</tissue>
        <tissue>Testis</tissue>
    </source>
</reference>
<reference key="11">
    <citation type="journal article" date="2003" name="EMBO Rep.">
        <title>Three-dimensional interplay among the ligand-binding domains of the urokinase-plasminogen-activator-receptor-associated protein, Endo180.</title>
        <authorList>
            <person name="Rivera-Calzada A."/>
            <person name="Robertson D."/>
            <person name="MacFadyen J.R."/>
            <person name="Boskovic J."/>
            <person name="Isacke C.M."/>
            <person name="Llorca O."/>
        </authorList>
    </citation>
    <scope>STRUCTURE BY ELECTRON MICROSCOPY (18 ANGSTROMS)</scope>
</reference>
<name>MRC2_MOUSE</name>
<gene>
    <name type="primary">Mrc2</name>
    <name type="synonym">Kiaa0709</name>
</gene>
<protein>
    <recommendedName>
        <fullName>C-type mannose receptor 2</fullName>
    </recommendedName>
    <alternativeName>
        <fullName>Lectin lambda</fullName>
    </alternativeName>
    <alternativeName>
        <fullName>Macrophage mannose receptor 2</fullName>
    </alternativeName>
    <cdAntigenName>CD280</cdAntigenName>
</protein>